<gene>
    <name type="ordered locus">MT3507</name>
</gene>
<evidence type="ECO:0000250" key="1">
    <source>
        <dbReference type="UniProtKB" id="Q9CCZ4"/>
    </source>
</evidence>
<evidence type="ECO:0000305" key="2"/>
<name>Y3399_MYCTO</name>
<proteinExistence type="inferred from homology"/>
<dbReference type="EC" id="2.1.1.-"/>
<dbReference type="EMBL" id="AE000516">
    <property type="protein sequence ID" value="AAK47844.1"/>
    <property type="molecule type" value="Genomic_DNA"/>
</dbReference>
<dbReference type="PIR" id="D70735">
    <property type="entry name" value="D70735"/>
</dbReference>
<dbReference type="SMR" id="P9WFH0"/>
<dbReference type="KEGG" id="mtc:MT3507"/>
<dbReference type="HOGENOM" id="CLU_056160_2_1_11"/>
<dbReference type="Proteomes" id="UP000001020">
    <property type="component" value="Chromosome"/>
</dbReference>
<dbReference type="GO" id="GO:0008168">
    <property type="term" value="F:methyltransferase activity"/>
    <property type="evidence" value="ECO:0007669"/>
    <property type="project" value="UniProtKB-KW"/>
</dbReference>
<dbReference type="GO" id="GO:0032259">
    <property type="term" value="P:methylation"/>
    <property type="evidence" value="ECO:0007669"/>
    <property type="project" value="UniProtKB-KW"/>
</dbReference>
<dbReference type="FunFam" id="3.40.50.150:FF:000152">
    <property type="entry name" value="S-adenosyl-L-methionine-dependent methyltransferase"/>
    <property type="match status" value="1"/>
</dbReference>
<dbReference type="Gene3D" id="3.40.50.150">
    <property type="entry name" value="Vaccinia Virus protein VP39"/>
    <property type="match status" value="1"/>
</dbReference>
<dbReference type="InterPro" id="IPR007213">
    <property type="entry name" value="Ppm1/Ppm2/Tcmp"/>
</dbReference>
<dbReference type="InterPro" id="IPR029063">
    <property type="entry name" value="SAM-dependent_MTases_sf"/>
</dbReference>
<dbReference type="InterPro" id="IPR011610">
    <property type="entry name" value="SAM_mthyl_Trfase_ML2640-like"/>
</dbReference>
<dbReference type="NCBIfam" id="TIGR00027">
    <property type="entry name" value="mthyl_TIGR00027"/>
    <property type="match status" value="1"/>
</dbReference>
<dbReference type="PANTHER" id="PTHR43619">
    <property type="entry name" value="S-ADENOSYL-L-METHIONINE-DEPENDENT METHYLTRANSFERASE YKTD-RELATED"/>
    <property type="match status" value="1"/>
</dbReference>
<dbReference type="PANTHER" id="PTHR43619:SF2">
    <property type="entry name" value="S-ADENOSYL-L-METHIONINE-DEPENDENT METHYLTRANSFERASES SUPERFAMILY PROTEIN"/>
    <property type="match status" value="1"/>
</dbReference>
<dbReference type="Pfam" id="PF04072">
    <property type="entry name" value="LCM"/>
    <property type="match status" value="1"/>
</dbReference>
<dbReference type="SUPFAM" id="SSF53335">
    <property type="entry name" value="S-adenosyl-L-methionine-dependent methyltransferases"/>
    <property type="match status" value="1"/>
</dbReference>
<comment type="function">
    <text evidence="1">Exhibits S-adenosyl-L-methionine-dependent methyltransferase activity.</text>
</comment>
<comment type="similarity">
    <text evidence="2">Belongs to the UPF0677 family.</text>
</comment>
<protein>
    <recommendedName>
        <fullName>Putative S-adenosyl-L-methionine-dependent methyltransferase MT3507</fullName>
        <ecNumber>2.1.1.-</ecNumber>
    </recommendedName>
</protein>
<sequence>MARPMGKLPSNTRKCAQCAMAEALLEIAGQTINQKDLGRSGRMTRTDNDTWDLASSVGATATMIATARALASRAENPLINDPFAEPLVRAVGIDLFTRLASGELRLEDIGDHATGGRWMIDNIAIRTKFYDDFFGDATTAGIRQVVILAAGLDTRAYRLPWPPGTVVYEIDQPAVIKFKTRALANLNAEPNAERHAVAVDLRNDWPTALKNAGFDPARPTAFSAEGLLSYLPPQGQDRLLDAITALSAPDSRLATQSPLVLDLAEEDEKKMRMKSAAEAWRERGFDLDLTELIYFDQRNDVADYLAGSGWQVTTSTGKELFAAQGLPPFEDDHITRFADRRYISAVLK</sequence>
<organism>
    <name type="scientific">Mycobacterium tuberculosis (strain CDC 1551 / Oshkosh)</name>
    <dbReference type="NCBI Taxonomy" id="83331"/>
    <lineage>
        <taxon>Bacteria</taxon>
        <taxon>Bacillati</taxon>
        <taxon>Actinomycetota</taxon>
        <taxon>Actinomycetes</taxon>
        <taxon>Mycobacteriales</taxon>
        <taxon>Mycobacteriaceae</taxon>
        <taxon>Mycobacterium</taxon>
        <taxon>Mycobacterium tuberculosis complex</taxon>
    </lineage>
</organism>
<accession>P9WFH0</accession>
<accession>L0TFA0</accession>
<accession>Q50726</accession>
<keyword id="KW-0489">Methyltransferase</keyword>
<keyword id="KW-1185">Reference proteome</keyword>
<keyword id="KW-0949">S-adenosyl-L-methionine</keyword>
<keyword id="KW-0808">Transferase</keyword>
<reference key="1">
    <citation type="journal article" date="2002" name="J. Bacteriol.">
        <title>Whole-genome comparison of Mycobacterium tuberculosis clinical and laboratory strains.</title>
        <authorList>
            <person name="Fleischmann R.D."/>
            <person name="Alland D."/>
            <person name="Eisen J.A."/>
            <person name="Carpenter L."/>
            <person name="White O."/>
            <person name="Peterson J.D."/>
            <person name="DeBoy R.T."/>
            <person name="Dodson R.J."/>
            <person name="Gwinn M.L."/>
            <person name="Haft D.H."/>
            <person name="Hickey E.K."/>
            <person name="Kolonay J.F."/>
            <person name="Nelson W.C."/>
            <person name="Umayam L.A."/>
            <person name="Ermolaeva M.D."/>
            <person name="Salzberg S.L."/>
            <person name="Delcher A."/>
            <person name="Utterback T.R."/>
            <person name="Weidman J.F."/>
            <person name="Khouri H.M."/>
            <person name="Gill J."/>
            <person name="Mikula A."/>
            <person name="Bishai W."/>
            <person name="Jacobs W.R. Jr."/>
            <person name="Venter J.C."/>
            <person name="Fraser C.M."/>
        </authorList>
    </citation>
    <scope>NUCLEOTIDE SEQUENCE [LARGE SCALE GENOMIC DNA]</scope>
    <source>
        <strain>CDC 1551 / Oshkosh</strain>
    </source>
</reference>
<feature type="chain" id="PRO_0000428540" description="Putative S-adenosyl-L-methionine-dependent methyltransferase MT3507">
    <location>
        <begin position="1"/>
        <end position="348"/>
    </location>
</feature>
<feature type="binding site" evidence="1">
    <location>
        <position position="171"/>
    </location>
    <ligand>
        <name>S-adenosyl-L-methionine</name>
        <dbReference type="ChEBI" id="CHEBI:59789"/>
    </ligand>
</feature>
<feature type="binding site" evidence="1">
    <location>
        <begin position="200"/>
        <end position="201"/>
    </location>
    <ligand>
        <name>S-adenosyl-L-methionine</name>
        <dbReference type="ChEBI" id="CHEBI:59789"/>
    </ligand>
</feature>